<accession>O66862</accession>
<comment type="function">
    <text evidence="1">Involved in the biosynthesis of lipid A, a phosphorylated glycolipid that anchors the lipopolysaccharide to the outer membrane of the cell.</text>
</comment>
<comment type="catalytic activity">
    <reaction evidence="1">
        <text>a (3R)-hydroxyacyl-[ACP] + UDP-N-acetyl-alpha-D-glucosamine = a UDP-3-O-[(3R)-3-hydroxyacyl]-N-acetyl-alpha-D-glucosamine + holo-[ACP]</text>
        <dbReference type="Rhea" id="RHEA:67812"/>
        <dbReference type="Rhea" id="RHEA-COMP:9685"/>
        <dbReference type="Rhea" id="RHEA-COMP:9945"/>
        <dbReference type="ChEBI" id="CHEBI:57705"/>
        <dbReference type="ChEBI" id="CHEBI:64479"/>
        <dbReference type="ChEBI" id="CHEBI:78827"/>
        <dbReference type="ChEBI" id="CHEBI:173225"/>
        <dbReference type="EC" id="2.3.1.129"/>
    </reaction>
</comment>
<comment type="pathway">
    <text evidence="1">Glycolipid biosynthesis; lipid IV(A) biosynthesis; lipid IV(A) from (3R)-3-hydroxytetradecanoyl-[acyl-carrier-protein] and UDP-N-acetyl-alpha-D-glucosamine: step 1/6.</text>
</comment>
<comment type="subunit">
    <text evidence="1">Homotrimer.</text>
</comment>
<comment type="subcellular location">
    <subcellularLocation>
        <location evidence="1">Cytoplasm</location>
    </subcellularLocation>
</comment>
<comment type="similarity">
    <text evidence="1">Belongs to the transferase hexapeptide repeat family. LpxA subfamily.</text>
</comment>
<sequence>MKVHSSVLIEGEVEIPEDVEIGAYTVIQGNVKIGKGTKIGNRVTIKGNVTIGENCKIFDGAVIGEAPQHLKYEGEETSVEIGNNVIIREYVTIHRGTKLDKGKTVVGDNVMLMAYSHVAHDCVVGNNVIMANCATLGGHVVVGDYALIGGLSAVHQWARVGEHAMVGGLTGVSLDIPPYTVASGQHAKLYGINIIGLRRRGFPEEVIKAISKAYRIIFRSPLPRQKAPEIVFQELGQYEEVRKMVEFIKSSKRGVARHHKD</sequence>
<gene>
    <name evidence="1" type="primary">lpxA</name>
    <name type="ordered locus">aq_604</name>
</gene>
<keyword id="KW-0012">Acyltransferase</keyword>
<keyword id="KW-0963">Cytoplasm</keyword>
<keyword id="KW-0441">Lipid A biosynthesis</keyword>
<keyword id="KW-0444">Lipid biosynthesis</keyword>
<keyword id="KW-0443">Lipid metabolism</keyword>
<keyword id="KW-1185">Reference proteome</keyword>
<keyword id="KW-0677">Repeat</keyword>
<keyword id="KW-0808">Transferase</keyword>
<organism>
    <name type="scientific">Aquifex aeolicus (strain VF5)</name>
    <dbReference type="NCBI Taxonomy" id="224324"/>
    <lineage>
        <taxon>Bacteria</taxon>
        <taxon>Pseudomonadati</taxon>
        <taxon>Aquificota</taxon>
        <taxon>Aquificia</taxon>
        <taxon>Aquificales</taxon>
        <taxon>Aquificaceae</taxon>
        <taxon>Aquifex</taxon>
    </lineage>
</organism>
<evidence type="ECO:0000255" key="1">
    <source>
        <dbReference type="HAMAP-Rule" id="MF_00387"/>
    </source>
</evidence>
<reference key="1">
    <citation type="journal article" date="1998" name="Nature">
        <title>The complete genome of the hyperthermophilic bacterium Aquifex aeolicus.</title>
        <authorList>
            <person name="Deckert G."/>
            <person name="Warren P.V."/>
            <person name="Gaasterland T."/>
            <person name="Young W.G."/>
            <person name="Lenox A.L."/>
            <person name="Graham D.E."/>
            <person name="Overbeek R."/>
            <person name="Snead M.A."/>
            <person name="Keller M."/>
            <person name="Aujay M."/>
            <person name="Huber R."/>
            <person name="Feldman R.A."/>
            <person name="Short J.M."/>
            <person name="Olsen G.J."/>
            <person name="Swanson R.V."/>
        </authorList>
    </citation>
    <scope>NUCLEOTIDE SEQUENCE [LARGE SCALE GENOMIC DNA]</scope>
    <source>
        <strain>VF5</strain>
    </source>
</reference>
<dbReference type="EC" id="2.3.1.129" evidence="1"/>
<dbReference type="EMBL" id="AE000657">
    <property type="protein sequence ID" value="AAC06825.1"/>
    <property type="molecule type" value="Genomic_DNA"/>
</dbReference>
<dbReference type="PIR" id="B70354">
    <property type="entry name" value="B70354"/>
</dbReference>
<dbReference type="RefSeq" id="NP_213422.1">
    <property type="nucleotide sequence ID" value="NC_000918.1"/>
</dbReference>
<dbReference type="RefSeq" id="WP_010880360.1">
    <property type="nucleotide sequence ID" value="NC_000918.1"/>
</dbReference>
<dbReference type="SMR" id="O66862"/>
<dbReference type="FunCoup" id="O66862">
    <property type="interactions" value="365"/>
</dbReference>
<dbReference type="STRING" id="224324.aq_604"/>
<dbReference type="EnsemblBacteria" id="AAC06825">
    <property type="protein sequence ID" value="AAC06825"/>
    <property type="gene ID" value="aq_604"/>
</dbReference>
<dbReference type="KEGG" id="aae:aq_604"/>
<dbReference type="PATRIC" id="fig|224324.8.peg.493"/>
<dbReference type="eggNOG" id="COG1043">
    <property type="taxonomic scope" value="Bacteria"/>
</dbReference>
<dbReference type="HOGENOM" id="CLU_061249_0_0_0"/>
<dbReference type="InParanoid" id="O66862"/>
<dbReference type="OrthoDB" id="9807278at2"/>
<dbReference type="UniPathway" id="UPA00359">
    <property type="reaction ID" value="UER00477"/>
</dbReference>
<dbReference type="Proteomes" id="UP000000798">
    <property type="component" value="Chromosome"/>
</dbReference>
<dbReference type="GO" id="GO:0005737">
    <property type="term" value="C:cytoplasm"/>
    <property type="evidence" value="ECO:0007669"/>
    <property type="project" value="UniProtKB-SubCell"/>
</dbReference>
<dbReference type="GO" id="GO:0016020">
    <property type="term" value="C:membrane"/>
    <property type="evidence" value="ECO:0007669"/>
    <property type="project" value="GOC"/>
</dbReference>
<dbReference type="GO" id="GO:0008780">
    <property type="term" value="F:acyl-[acyl-carrier-protein]-UDP-N-acetylglucosamine O-acyltransferase activity"/>
    <property type="evidence" value="ECO:0007669"/>
    <property type="project" value="UniProtKB-UniRule"/>
</dbReference>
<dbReference type="GO" id="GO:0009245">
    <property type="term" value="P:lipid A biosynthetic process"/>
    <property type="evidence" value="ECO:0007669"/>
    <property type="project" value="UniProtKB-UniRule"/>
</dbReference>
<dbReference type="CDD" id="cd03351">
    <property type="entry name" value="LbH_UDP-GlcNAc_AT"/>
    <property type="match status" value="1"/>
</dbReference>
<dbReference type="Gene3D" id="2.160.10.10">
    <property type="entry name" value="Hexapeptide repeat proteins"/>
    <property type="match status" value="1"/>
</dbReference>
<dbReference type="Gene3D" id="1.20.1180.10">
    <property type="entry name" value="Udp N-acetylglucosamine O-acyltransferase, C-terminal domain"/>
    <property type="match status" value="1"/>
</dbReference>
<dbReference type="HAMAP" id="MF_00387">
    <property type="entry name" value="LpxA"/>
    <property type="match status" value="1"/>
</dbReference>
<dbReference type="InterPro" id="IPR029098">
    <property type="entry name" value="Acetyltransf_C"/>
</dbReference>
<dbReference type="InterPro" id="IPR037157">
    <property type="entry name" value="Acetyltransf_C_sf"/>
</dbReference>
<dbReference type="InterPro" id="IPR001451">
    <property type="entry name" value="Hexapep"/>
</dbReference>
<dbReference type="InterPro" id="IPR018357">
    <property type="entry name" value="Hexapep_transf_CS"/>
</dbReference>
<dbReference type="InterPro" id="IPR010137">
    <property type="entry name" value="Lipid_A_LpxA"/>
</dbReference>
<dbReference type="InterPro" id="IPR011004">
    <property type="entry name" value="Trimer_LpxA-like_sf"/>
</dbReference>
<dbReference type="NCBIfam" id="TIGR01852">
    <property type="entry name" value="lipid_A_lpxA"/>
    <property type="match status" value="1"/>
</dbReference>
<dbReference type="NCBIfam" id="NF003657">
    <property type="entry name" value="PRK05289.1"/>
    <property type="match status" value="1"/>
</dbReference>
<dbReference type="PANTHER" id="PTHR43480">
    <property type="entry name" value="ACYL-[ACYL-CARRIER-PROTEIN]--UDP-N-ACETYLGLUCOSAMINE O-ACYLTRANSFERASE"/>
    <property type="match status" value="1"/>
</dbReference>
<dbReference type="PANTHER" id="PTHR43480:SF1">
    <property type="entry name" value="ACYL-[ACYL-CARRIER-PROTEIN]--UDP-N-ACETYLGLUCOSAMINE O-ACYLTRANSFERASE, MITOCHONDRIAL-RELATED"/>
    <property type="match status" value="1"/>
</dbReference>
<dbReference type="Pfam" id="PF13720">
    <property type="entry name" value="Acetyltransf_11"/>
    <property type="match status" value="1"/>
</dbReference>
<dbReference type="Pfam" id="PF00132">
    <property type="entry name" value="Hexapep"/>
    <property type="match status" value="2"/>
</dbReference>
<dbReference type="PIRSF" id="PIRSF000456">
    <property type="entry name" value="UDP-GlcNAc_acltr"/>
    <property type="match status" value="1"/>
</dbReference>
<dbReference type="SUPFAM" id="SSF51161">
    <property type="entry name" value="Trimeric LpxA-like enzymes"/>
    <property type="match status" value="1"/>
</dbReference>
<dbReference type="PROSITE" id="PS00101">
    <property type="entry name" value="HEXAPEP_TRANSFERASES"/>
    <property type="match status" value="2"/>
</dbReference>
<protein>
    <recommendedName>
        <fullName evidence="1">Acyl-[acyl-carrier-protein]--UDP-N-acetylglucosamine O-acyltransferase</fullName>
        <shortName evidence="1">UDP-N-acetylglucosamine acyltransferase</shortName>
        <ecNumber evidence="1">2.3.1.129</ecNumber>
    </recommendedName>
</protein>
<name>LPXA_AQUAE</name>
<proteinExistence type="inferred from homology"/>
<feature type="chain" id="PRO_0000188033" description="Acyl-[acyl-carrier-protein]--UDP-N-acetylglucosamine O-acyltransferase">
    <location>
        <begin position="1"/>
        <end position="261"/>
    </location>
</feature>